<evidence type="ECO:0000255" key="1">
    <source>
        <dbReference type="HAMAP-Rule" id="MF_00049"/>
    </source>
</evidence>
<accession>B5QVP9</accession>
<proteinExistence type="inferred from homology"/>
<reference key="1">
    <citation type="journal article" date="2008" name="Genome Res.">
        <title>Comparative genome analysis of Salmonella enteritidis PT4 and Salmonella gallinarum 287/91 provides insights into evolutionary and host adaptation pathways.</title>
        <authorList>
            <person name="Thomson N.R."/>
            <person name="Clayton D.J."/>
            <person name="Windhorst D."/>
            <person name="Vernikos G."/>
            <person name="Davidson S."/>
            <person name="Churcher C."/>
            <person name="Quail M.A."/>
            <person name="Stevens M."/>
            <person name="Jones M.A."/>
            <person name="Watson M."/>
            <person name="Barron A."/>
            <person name="Layton A."/>
            <person name="Pickard D."/>
            <person name="Kingsley R.A."/>
            <person name="Bignell A."/>
            <person name="Clark L."/>
            <person name="Harris B."/>
            <person name="Ormond D."/>
            <person name="Abdellah Z."/>
            <person name="Brooks K."/>
            <person name="Cherevach I."/>
            <person name="Chillingworth T."/>
            <person name="Woodward J."/>
            <person name="Norberczak H."/>
            <person name="Lord A."/>
            <person name="Arrowsmith C."/>
            <person name="Jagels K."/>
            <person name="Moule S."/>
            <person name="Mungall K."/>
            <person name="Saunders M."/>
            <person name="Whitehead S."/>
            <person name="Chabalgoity J.A."/>
            <person name="Maskell D."/>
            <person name="Humphreys T."/>
            <person name="Roberts M."/>
            <person name="Barrow P.A."/>
            <person name="Dougan G."/>
            <person name="Parkhill J."/>
        </authorList>
    </citation>
    <scope>NUCLEOTIDE SEQUENCE [LARGE SCALE GENOMIC DNA]</scope>
    <source>
        <strain>P125109</strain>
    </source>
</reference>
<name>SYL_SALEP</name>
<feature type="chain" id="PRO_1000091356" description="Leucine--tRNA ligase">
    <location>
        <begin position="1"/>
        <end position="860"/>
    </location>
</feature>
<feature type="short sequence motif" description="'HIGH' region">
    <location>
        <begin position="42"/>
        <end position="52"/>
    </location>
</feature>
<feature type="short sequence motif" description="'KMSKS' region">
    <location>
        <begin position="619"/>
        <end position="623"/>
    </location>
</feature>
<feature type="binding site" evidence="1">
    <location>
        <position position="622"/>
    </location>
    <ligand>
        <name>ATP</name>
        <dbReference type="ChEBI" id="CHEBI:30616"/>
    </ligand>
</feature>
<organism>
    <name type="scientific">Salmonella enteritidis PT4 (strain P125109)</name>
    <dbReference type="NCBI Taxonomy" id="550537"/>
    <lineage>
        <taxon>Bacteria</taxon>
        <taxon>Pseudomonadati</taxon>
        <taxon>Pseudomonadota</taxon>
        <taxon>Gammaproteobacteria</taxon>
        <taxon>Enterobacterales</taxon>
        <taxon>Enterobacteriaceae</taxon>
        <taxon>Salmonella</taxon>
    </lineage>
</organism>
<comment type="catalytic activity">
    <reaction evidence="1">
        <text>tRNA(Leu) + L-leucine + ATP = L-leucyl-tRNA(Leu) + AMP + diphosphate</text>
        <dbReference type="Rhea" id="RHEA:11688"/>
        <dbReference type="Rhea" id="RHEA-COMP:9613"/>
        <dbReference type="Rhea" id="RHEA-COMP:9622"/>
        <dbReference type="ChEBI" id="CHEBI:30616"/>
        <dbReference type="ChEBI" id="CHEBI:33019"/>
        <dbReference type="ChEBI" id="CHEBI:57427"/>
        <dbReference type="ChEBI" id="CHEBI:78442"/>
        <dbReference type="ChEBI" id="CHEBI:78494"/>
        <dbReference type="ChEBI" id="CHEBI:456215"/>
        <dbReference type="EC" id="6.1.1.4"/>
    </reaction>
</comment>
<comment type="subcellular location">
    <subcellularLocation>
        <location evidence="1">Cytoplasm</location>
    </subcellularLocation>
</comment>
<comment type="similarity">
    <text evidence="1">Belongs to the class-I aminoacyl-tRNA synthetase family.</text>
</comment>
<gene>
    <name evidence="1" type="primary">leuS</name>
    <name type="ordered locus">SEN0617</name>
</gene>
<protein>
    <recommendedName>
        <fullName evidence="1">Leucine--tRNA ligase</fullName>
        <ecNumber evidence="1">6.1.1.4</ecNumber>
    </recommendedName>
    <alternativeName>
        <fullName evidence="1">Leucyl-tRNA synthetase</fullName>
        <shortName evidence="1">LeuRS</shortName>
    </alternativeName>
</protein>
<keyword id="KW-0030">Aminoacyl-tRNA synthetase</keyword>
<keyword id="KW-0067">ATP-binding</keyword>
<keyword id="KW-0963">Cytoplasm</keyword>
<keyword id="KW-0436">Ligase</keyword>
<keyword id="KW-0547">Nucleotide-binding</keyword>
<keyword id="KW-0648">Protein biosynthesis</keyword>
<sequence>MQEQYRPEEIESKVQLHWDEKRTFEVTEDESKEKYYCLSMLPYPSGRLHMGHVRNYTIGDVVARYQRMLGKNVLQPIGWDAFGLPAEGAAVKNNTAPAPWTYDNIAYMKNQLKTLGFGYDWSREIATCTPEYYRWEQKFFTELYKKGLVYKKTSAVNWCPNDQTVLANEQVIDGCCWRCDTKVERKEIPQWFIKITAYADELLRDLDKLDHWPDTVKTMQRNWIGRSEGVEITFDVKGYDNTLTVYTTRPDTFMGATYLAVAAGHPLAQKAAANNAELAAFIDECRNTKVAEAEMATMEKKGVDTGFKATHPLTGEEIPVWAANFVLMEYGTGAVMAVPGHDQRDYEFASKYGLTIKPVILAADGSEPDLSEQALTEKGVLFNSGEFDGLAFEAAFNAIADKLAEKGVGERKVNYRLRDWGVSRQRYWGAPIPMVTLEDGTVLPTPEDQLPVILPEDVVMDGITSPIKADPEWAKTTVNGMPALRETDTFDTFMESSWYYARYTCPQYQEGMLDSKAANYWLPVDIYIGGIEHAIMHLLYFRFFHKLMRDAGMVTSDEPAKQLLCQGMVLADAFYYVGENGERNWVSPVDAIVERDEKGRIVKAKDAAGHELVYTGMSKMSKSKNNGIDPQVMVERYGADTVRLFMMFASPADMTLEWQESGVEGANRFIKRVWKLVYEHTAKGPVAALNVDALSEDQKALRRDVHKTIAKVTDDIGRRQTFNTAIAAIMELMNKLAKAPQEGEQDRALLQEALQAVVRMLNPFTPHVCFTLWQELGGEGDIDNAPWPVADEQAMVENTTLVVVQVNGKVRGKITVAVDATEEQVRERAGQEHLVAKYLDGVTVRKVIYVPGKLLNLVVG</sequence>
<dbReference type="EC" id="6.1.1.4" evidence="1"/>
<dbReference type="EMBL" id="AM933172">
    <property type="protein sequence ID" value="CAR32205.1"/>
    <property type="molecule type" value="Genomic_DNA"/>
</dbReference>
<dbReference type="RefSeq" id="WP_001157915.1">
    <property type="nucleotide sequence ID" value="NC_011294.1"/>
</dbReference>
<dbReference type="SMR" id="B5QVP9"/>
<dbReference type="KEGG" id="set:SEN0617"/>
<dbReference type="HOGENOM" id="CLU_004427_0_0_6"/>
<dbReference type="Proteomes" id="UP000000613">
    <property type="component" value="Chromosome"/>
</dbReference>
<dbReference type="GO" id="GO:0005829">
    <property type="term" value="C:cytosol"/>
    <property type="evidence" value="ECO:0007669"/>
    <property type="project" value="TreeGrafter"/>
</dbReference>
<dbReference type="GO" id="GO:0002161">
    <property type="term" value="F:aminoacyl-tRNA deacylase activity"/>
    <property type="evidence" value="ECO:0007669"/>
    <property type="project" value="InterPro"/>
</dbReference>
<dbReference type="GO" id="GO:0005524">
    <property type="term" value="F:ATP binding"/>
    <property type="evidence" value="ECO:0007669"/>
    <property type="project" value="UniProtKB-UniRule"/>
</dbReference>
<dbReference type="GO" id="GO:0004823">
    <property type="term" value="F:leucine-tRNA ligase activity"/>
    <property type="evidence" value="ECO:0007669"/>
    <property type="project" value="UniProtKB-UniRule"/>
</dbReference>
<dbReference type="GO" id="GO:0006429">
    <property type="term" value="P:leucyl-tRNA aminoacylation"/>
    <property type="evidence" value="ECO:0007669"/>
    <property type="project" value="UniProtKB-UniRule"/>
</dbReference>
<dbReference type="CDD" id="cd07958">
    <property type="entry name" value="Anticodon_Ia_Leu_BEm"/>
    <property type="match status" value="1"/>
</dbReference>
<dbReference type="CDD" id="cd00812">
    <property type="entry name" value="LeuRS_core"/>
    <property type="match status" value="1"/>
</dbReference>
<dbReference type="FunFam" id="1.10.730.10:FF:000002">
    <property type="entry name" value="Leucine--tRNA ligase"/>
    <property type="match status" value="2"/>
</dbReference>
<dbReference type="FunFam" id="2.20.28.290:FF:000001">
    <property type="entry name" value="Leucine--tRNA ligase"/>
    <property type="match status" value="1"/>
</dbReference>
<dbReference type="FunFam" id="3.10.20.590:FF:000001">
    <property type="entry name" value="Leucine--tRNA ligase"/>
    <property type="match status" value="1"/>
</dbReference>
<dbReference type="FunFam" id="3.40.50.620:FF:000003">
    <property type="entry name" value="Leucine--tRNA ligase"/>
    <property type="match status" value="1"/>
</dbReference>
<dbReference type="FunFam" id="3.40.50.620:FF:000124">
    <property type="entry name" value="Leucine--tRNA ligase"/>
    <property type="match status" value="1"/>
</dbReference>
<dbReference type="FunFam" id="3.90.740.10:FF:000012">
    <property type="entry name" value="Leucine--tRNA ligase"/>
    <property type="match status" value="1"/>
</dbReference>
<dbReference type="Gene3D" id="2.20.28.290">
    <property type="match status" value="1"/>
</dbReference>
<dbReference type="Gene3D" id="3.10.20.590">
    <property type="match status" value="1"/>
</dbReference>
<dbReference type="Gene3D" id="3.40.50.620">
    <property type="entry name" value="HUPs"/>
    <property type="match status" value="1"/>
</dbReference>
<dbReference type="Gene3D" id="1.10.730.10">
    <property type="entry name" value="Isoleucyl-tRNA Synthetase, Domain 1"/>
    <property type="match status" value="1"/>
</dbReference>
<dbReference type="Gene3D" id="3.90.740.10">
    <property type="entry name" value="Valyl/Leucyl/Isoleucyl-tRNA synthetase, editing domain"/>
    <property type="match status" value="1"/>
</dbReference>
<dbReference type="HAMAP" id="MF_00049_B">
    <property type="entry name" value="Leu_tRNA_synth_B"/>
    <property type="match status" value="1"/>
</dbReference>
<dbReference type="InterPro" id="IPR001412">
    <property type="entry name" value="aa-tRNA-synth_I_CS"/>
</dbReference>
<dbReference type="InterPro" id="IPR002300">
    <property type="entry name" value="aa-tRNA-synth_Ia"/>
</dbReference>
<dbReference type="InterPro" id="IPR002302">
    <property type="entry name" value="Leu-tRNA-ligase"/>
</dbReference>
<dbReference type="InterPro" id="IPR025709">
    <property type="entry name" value="Leu_tRNA-synth_edit"/>
</dbReference>
<dbReference type="InterPro" id="IPR013155">
    <property type="entry name" value="M/V/L/I-tRNA-synth_anticd-bd"/>
</dbReference>
<dbReference type="InterPro" id="IPR015413">
    <property type="entry name" value="Methionyl/Leucyl_tRNA_Synth"/>
</dbReference>
<dbReference type="InterPro" id="IPR014729">
    <property type="entry name" value="Rossmann-like_a/b/a_fold"/>
</dbReference>
<dbReference type="InterPro" id="IPR009080">
    <property type="entry name" value="tRNAsynth_Ia_anticodon-bd"/>
</dbReference>
<dbReference type="InterPro" id="IPR009008">
    <property type="entry name" value="Val/Leu/Ile-tRNA-synth_edit"/>
</dbReference>
<dbReference type="NCBIfam" id="TIGR00396">
    <property type="entry name" value="leuS_bact"/>
    <property type="match status" value="1"/>
</dbReference>
<dbReference type="PANTHER" id="PTHR43740:SF2">
    <property type="entry name" value="LEUCINE--TRNA LIGASE, MITOCHONDRIAL"/>
    <property type="match status" value="1"/>
</dbReference>
<dbReference type="PANTHER" id="PTHR43740">
    <property type="entry name" value="LEUCYL-TRNA SYNTHETASE"/>
    <property type="match status" value="1"/>
</dbReference>
<dbReference type="Pfam" id="PF08264">
    <property type="entry name" value="Anticodon_1"/>
    <property type="match status" value="1"/>
</dbReference>
<dbReference type="Pfam" id="PF00133">
    <property type="entry name" value="tRNA-synt_1"/>
    <property type="match status" value="2"/>
</dbReference>
<dbReference type="Pfam" id="PF13603">
    <property type="entry name" value="tRNA-synt_1_2"/>
    <property type="match status" value="1"/>
</dbReference>
<dbReference type="Pfam" id="PF09334">
    <property type="entry name" value="tRNA-synt_1g"/>
    <property type="match status" value="1"/>
</dbReference>
<dbReference type="PRINTS" id="PR00985">
    <property type="entry name" value="TRNASYNTHLEU"/>
</dbReference>
<dbReference type="SUPFAM" id="SSF47323">
    <property type="entry name" value="Anticodon-binding domain of a subclass of class I aminoacyl-tRNA synthetases"/>
    <property type="match status" value="1"/>
</dbReference>
<dbReference type="SUPFAM" id="SSF52374">
    <property type="entry name" value="Nucleotidylyl transferase"/>
    <property type="match status" value="1"/>
</dbReference>
<dbReference type="SUPFAM" id="SSF50677">
    <property type="entry name" value="ValRS/IleRS/LeuRS editing domain"/>
    <property type="match status" value="1"/>
</dbReference>
<dbReference type="PROSITE" id="PS00178">
    <property type="entry name" value="AA_TRNA_LIGASE_I"/>
    <property type="match status" value="1"/>
</dbReference>